<reference key="1">
    <citation type="submission" date="2006-12" db="EMBL/GenBank/DDBJ databases">
        <title>Complete sequence of Shewanella sp. W3-18-1.</title>
        <authorList>
            <consortium name="US DOE Joint Genome Institute"/>
            <person name="Copeland A."/>
            <person name="Lucas S."/>
            <person name="Lapidus A."/>
            <person name="Barry K."/>
            <person name="Detter J.C."/>
            <person name="Glavina del Rio T."/>
            <person name="Hammon N."/>
            <person name="Israni S."/>
            <person name="Dalin E."/>
            <person name="Tice H."/>
            <person name="Pitluck S."/>
            <person name="Chain P."/>
            <person name="Malfatti S."/>
            <person name="Shin M."/>
            <person name="Vergez L."/>
            <person name="Schmutz J."/>
            <person name="Larimer F."/>
            <person name="Land M."/>
            <person name="Hauser L."/>
            <person name="Kyrpides N."/>
            <person name="Lykidis A."/>
            <person name="Tiedje J."/>
            <person name="Richardson P."/>
        </authorList>
    </citation>
    <scope>NUCLEOTIDE SEQUENCE [LARGE SCALE GENOMIC DNA]</scope>
    <source>
        <strain>W3-18-1</strain>
    </source>
</reference>
<organism>
    <name type="scientific">Shewanella sp. (strain W3-18-1)</name>
    <dbReference type="NCBI Taxonomy" id="351745"/>
    <lineage>
        <taxon>Bacteria</taxon>
        <taxon>Pseudomonadati</taxon>
        <taxon>Pseudomonadota</taxon>
        <taxon>Gammaproteobacteria</taxon>
        <taxon>Alteromonadales</taxon>
        <taxon>Shewanellaceae</taxon>
        <taxon>Shewanella</taxon>
    </lineage>
</organism>
<sequence>MRHYEIVFMVHPDQSEQVPGMIERYTGVITEANGTIHRLEDWGRRQLAYPIQDLHKAHYVLMNVEAPAETIEELETAFRFNDAVLRNMVMRTKVAVTEASPMARARDERDSRRGPAGERSYDEAHAEEIGE</sequence>
<protein>
    <recommendedName>
        <fullName evidence="1">Small ribosomal subunit protein bS6</fullName>
    </recommendedName>
    <alternativeName>
        <fullName evidence="3">30S ribosomal protein S6</fullName>
    </alternativeName>
</protein>
<feature type="chain" id="PRO_1000005353" description="Small ribosomal subunit protein bS6">
    <location>
        <begin position="1"/>
        <end position="131"/>
    </location>
</feature>
<feature type="region of interest" description="Disordered" evidence="2">
    <location>
        <begin position="98"/>
        <end position="131"/>
    </location>
</feature>
<feature type="compositionally biased region" description="Basic and acidic residues" evidence="2">
    <location>
        <begin position="104"/>
        <end position="131"/>
    </location>
</feature>
<gene>
    <name evidence="1" type="primary">rpsF</name>
    <name type="ordered locus">Sputw3181_3422</name>
</gene>
<comment type="function">
    <text evidence="1">Binds together with bS18 to 16S ribosomal RNA.</text>
</comment>
<comment type="similarity">
    <text evidence="1">Belongs to the bacterial ribosomal protein bS6 family.</text>
</comment>
<dbReference type="EMBL" id="CP000503">
    <property type="protein sequence ID" value="ABM26234.1"/>
    <property type="molecule type" value="Genomic_DNA"/>
</dbReference>
<dbReference type="RefSeq" id="WP_011790676.1">
    <property type="nucleotide sequence ID" value="NC_008750.1"/>
</dbReference>
<dbReference type="SMR" id="A1RNI9"/>
<dbReference type="GeneID" id="67442211"/>
<dbReference type="KEGG" id="shw:Sputw3181_3422"/>
<dbReference type="HOGENOM" id="CLU_113441_6_1_6"/>
<dbReference type="Proteomes" id="UP000002597">
    <property type="component" value="Chromosome"/>
</dbReference>
<dbReference type="GO" id="GO:0022627">
    <property type="term" value="C:cytosolic small ribosomal subunit"/>
    <property type="evidence" value="ECO:0007669"/>
    <property type="project" value="TreeGrafter"/>
</dbReference>
<dbReference type="GO" id="GO:0070181">
    <property type="term" value="F:small ribosomal subunit rRNA binding"/>
    <property type="evidence" value="ECO:0007669"/>
    <property type="project" value="TreeGrafter"/>
</dbReference>
<dbReference type="GO" id="GO:0003735">
    <property type="term" value="F:structural constituent of ribosome"/>
    <property type="evidence" value="ECO:0007669"/>
    <property type="project" value="InterPro"/>
</dbReference>
<dbReference type="GO" id="GO:0006412">
    <property type="term" value="P:translation"/>
    <property type="evidence" value="ECO:0007669"/>
    <property type="project" value="UniProtKB-UniRule"/>
</dbReference>
<dbReference type="CDD" id="cd00473">
    <property type="entry name" value="bS6"/>
    <property type="match status" value="1"/>
</dbReference>
<dbReference type="FunFam" id="3.30.70.60:FF:000003">
    <property type="entry name" value="30S ribosomal protein S6"/>
    <property type="match status" value="1"/>
</dbReference>
<dbReference type="Gene3D" id="3.30.70.60">
    <property type="match status" value="1"/>
</dbReference>
<dbReference type="HAMAP" id="MF_00360">
    <property type="entry name" value="Ribosomal_bS6"/>
    <property type="match status" value="1"/>
</dbReference>
<dbReference type="InterPro" id="IPR000529">
    <property type="entry name" value="Ribosomal_bS6"/>
</dbReference>
<dbReference type="InterPro" id="IPR035980">
    <property type="entry name" value="Ribosomal_bS6_sf"/>
</dbReference>
<dbReference type="InterPro" id="IPR020814">
    <property type="entry name" value="Ribosomal_S6_plastid/chlpt"/>
</dbReference>
<dbReference type="InterPro" id="IPR014717">
    <property type="entry name" value="Transl_elong_EF1B/ribsomal_bS6"/>
</dbReference>
<dbReference type="NCBIfam" id="TIGR00166">
    <property type="entry name" value="S6"/>
    <property type="match status" value="1"/>
</dbReference>
<dbReference type="PANTHER" id="PTHR21011">
    <property type="entry name" value="MITOCHONDRIAL 28S RIBOSOMAL PROTEIN S6"/>
    <property type="match status" value="1"/>
</dbReference>
<dbReference type="PANTHER" id="PTHR21011:SF1">
    <property type="entry name" value="SMALL RIBOSOMAL SUBUNIT PROTEIN BS6M"/>
    <property type="match status" value="1"/>
</dbReference>
<dbReference type="Pfam" id="PF01250">
    <property type="entry name" value="Ribosomal_S6"/>
    <property type="match status" value="1"/>
</dbReference>
<dbReference type="SUPFAM" id="SSF54995">
    <property type="entry name" value="Ribosomal protein S6"/>
    <property type="match status" value="1"/>
</dbReference>
<accession>A1RNI9</accession>
<proteinExistence type="inferred from homology"/>
<evidence type="ECO:0000255" key="1">
    <source>
        <dbReference type="HAMAP-Rule" id="MF_00360"/>
    </source>
</evidence>
<evidence type="ECO:0000256" key="2">
    <source>
        <dbReference type="SAM" id="MobiDB-lite"/>
    </source>
</evidence>
<evidence type="ECO:0000305" key="3"/>
<keyword id="KW-0687">Ribonucleoprotein</keyword>
<keyword id="KW-0689">Ribosomal protein</keyword>
<keyword id="KW-0694">RNA-binding</keyword>
<keyword id="KW-0699">rRNA-binding</keyword>
<name>RS6_SHESW</name>